<dbReference type="EC" id="6.1.1.19" evidence="1"/>
<dbReference type="EMBL" id="AJ965256">
    <property type="protein sequence ID" value="CAI83277.1"/>
    <property type="molecule type" value="Genomic_DNA"/>
</dbReference>
<dbReference type="RefSeq" id="WP_011309628.1">
    <property type="nucleotide sequence ID" value="NC_007356.1"/>
</dbReference>
<dbReference type="SMR" id="Q3ZYF0"/>
<dbReference type="KEGG" id="deh:cbdbA1196"/>
<dbReference type="HOGENOM" id="CLU_006406_0_1_0"/>
<dbReference type="Proteomes" id="UP000000433">
    <property type="component" value="Chromosome"/>
</dbReference>
<dbReference type="GO" id="GO:0005737">
    <property type="term" value="C:cytoplasm"/>
    <property type="evidence" value="ECO:0007669"/>
    <property type="project" value="UniProtKB-SubCell"/>
</dbReference>
<dbReference type="GO" id="GO:0004814">
    <property type="term" value="F:arginine-tRNA ligase activity"/>
    <property type="evidence" value="ECO:0007669"/>
    <property type="project" value="UniProtKB-UniRule"/>
</dbReference>
<dbReference type="GO" id="GO:0005524">
    <property type="term" value="F:ATP binding"/>
    <property type="evidence" value="ECO:0007669"/>
    <property type="project" value="UniProtKB-UniRule"/>
</dbReference>
<dbReference type="GO" id="GO:0006420">
    <property type="term" value="P:arginyl-tRNA aminoacylation"/>
    <property type="evidence" value="ECO:0007669"/>
    <property type="project" value="UniProtKB-UniRule"/>
</dbReference>
<dbReference type="CDD" id="cd00671">
    <property type="entry name" value="ArgRS_core"/>
    <property type="match status" value="1"/>
</dbReference>
<dbReference type="FunFam" id="1.10.730.10:FF:000008">
    <property type="entry name" value="Arginine--tRNA ligase"/>
    <property type="match status" value="1"/>
</dbReference>
<dbReference type="FunFam" id="3.40.50.620:FF:000062">
    <property type="entry name" value="Arginine--tRNA ligase"/>
    <property type="match status" value="1"/>
</dbReference>
<dbReference type="Gene3D" id="3.30.1360.70">
    <property type="entry name" value="Arginyl tRNA synthetase N-terminal domain"/>
    <property type="match status" value="1"/>
</dbReference>
<dbReference type="Gene3D" id="3.40.50.620">
    <property type="entry name" value="HUPs"/>
    <property type="match status" value="1"/>
</dbReference>
<dbReference type="Gene3D" id="1.10.730.10">
    <property type="entry name" value="Isoleucyl-tRNA Synthetase, Domain 1"/>
    <property type="match status" value="1"/>
</dbReference>
<dbReference type="HAMAP" id="MF_00123">
    <property type="entry name" value="Arg_tRNA_synth"/>
    <property type="match status" value="1"/>
</dbReference>
<dbReference type="InterPro" id="IPR001412">
    <property type="entry name" value="aa-tRNA-synth_I_CS"/>
</dbReference>
<dbReference type="InterPro" id="IPR001278">
    <property type="entry name" value="Arg-tRNA-ligase"/>
</dbReference>
<dbReference type="InterPro" id="IPR005148">
    <property type="entry name" value="Arg-tRNA-synth_N"/>
</dbReference>
<dbReference type="InterPro" id="IPR036695">
    <property type="entry name" value="Arg-tRNA-synth_N_sf"/>
</dbReference>
<dbReference type="InterPro" id="IPR035684">
    <property type="entry name" value="ArgRS_core"/>
</dbReference>
<dbReference type="InterPro" id="IPR008909">
    <property type="entry name" value="DALR_anticod-bd"/>
</dbReference>
<dbReference type="InterPro" id="IPR014729">
    <property type="entry name" value="Rossmann-like_a/b/a_fold"/>
</dbReference>
<dbReference type="InterPro" id="IPR009080">
    <property type="entry name" value="tRNAsynth_Ia_anticodon-bd"/>
</dbReference>
<dbReference type="NCBIfam" id="TIGR00456">
    <property type="entry name" value="argS"/>
    <property type="match status" value="1"/>
</dbReference>
<dbReference type="PANTHER" id="PTHR11956:SF5">
    <property type="entry name" value="ARGININE--TRNA LIGASE, CYTOPLASMIC"/>
    <property type="match status" value="1"/>
</dbReference>
<dbReference type="PANTHER" id="PTHR11956">
    <property type="entry name" value="ARGINYL-TRNA SYNTHETASE"/>
    <property type="match status" value="1"/>
</dbReference>
<dbReference type="Pfam" id="PF03485">
    <property type="entry name" value="Arg_tRNA_synt_N"/>
    <property type="match status" value="1"/>
</dbReference>
<dbReference type="Pfam" id="PF05746">
    <property type="entry name" value="DALR_1"/>
    <property type="match status" value="1"/>
</dbReference>
<dbReference type="Pfam" id="PF00750">
    <property type="entry name" value="tRNA-synt_1d"/>
    <property type="match status" value="1"/>
</dbReference>
<dbReference type="PRINTS" id="PR01038">
    <property type="entry name" value="TRNASYNTHARG"/>
</dbReference>
<dbReference type="SMART" id="SM01016">
    <property type="entry name" value="Arg_tRNA_synt_N"/>
    <property type="match status" value="1"/>
</dbReference>
<dbReference type="SMART" id="SM00836">
    <property type="entry name" value="DALR_1"/>
    <property type="match status" value="1"/>
</dbReference>
<dbReference type="SUPFAM" id="SSF47323">
    <property type="entry name" value="Anticodon-binding domain of a subclass of class I aminoacyl-tRNA synthetases"/>
    <property type="match status" value="1"/>
</dbReference>
<dbReference type="SUPFAM" id="SSF55190">
    <property type="entry name" value="Arginyl-tRNA synthetase (ArgRS), N-terminal 'additional' domain"/>
    <property type="match status" value="1"/>
</dbReference>
<dbReference type="SUPFAM" id="SSF52374">
    <property type="entry name" value="Nucleotidylyl transferase"/>
    <property type="match status" value="1"/>
</dbReference>
<dbReference type="PROSITE" id="PS00178">
    <property type="entry name" value="AA_TRNA_LIGASE_I"/>
    <property type="match status" value="1"/>
</dbReference>
<organism>
    <name type="scientific">Dehalococcoides mccartyi (strain CBDB1)</name>
    <dbReference type="NCBI Taxonomy" id="255470"/>
    <lineage>
        <taxon>Bacteria</taxon>
        <taxon>Bacillati</taxon>
        <taxon>Chloroflexota</taxon>
        <taxon>Dehalococcoidia</taxon>
        <taxon>Dehalococcoidales</taxon>
        <taxon>Dehalococcoidaceae</taxon>
        <taxon>Dehalococcoides</taxon>
    </lineage>
</organism>
<gene>
    <name evidence="1" type="primary">argS</name>
    <name type="ordered locus">cbdbA1196</name>
</gene>
<feature type="chain" id="PRO_0000242013" description="Arginine--tRNA ligase">
    <location>
        <begin position="1"/>
        <end position="556"/>
    </location>
</feature>
<feature type="short sequence motif" description="'HIGH' region">
    <location>
        <begin position="133"/>
        <end position="143"/>
    </location>
</feature>
<reference key="1">
    <citation type="journal article" date="2005" name="Nat. Biotechnol.">
        <title>Genome sequence of the chlorinated compound-respiring bacterium Dehalococcoides species strain CBDB1.</title>
        <authorList>
            <person name="Kube M."/>
            <person name="Beck A."/>
            <person name="Zinder S.H."/>
            <person name="Kuhl H."/>
            <person name="Reinhardt R."/>
            <person name="Adrian L."/>
        </authorList>
    </citation>
    <scope>NUCLEOTIDE SEQUENCE [LARGE SCALE GENOMIC DNA]</scope>
    <source>
        <strain>CBDB1</strain>
    </source>
</reference>
<proteinExistence type="inferred from homology"/>
<accession>Q3ZYF0</accession>
<protein>
    <recommendedName>
        <fullName evidence="1">Arginine--tRNA ligase</fullName>
        <ecNumber evidence="1">6.1.1.19</ecNumber>
    </recommendedName>
    <alternativeName>
        <fullName evidence="1">Arginyl-tRNA synthetase</fullName>
        <shortName evidence="1">ArgRS</shortName>
    </alternativeName>
</protein>
<comment type="catalytic activity">
    <reaction evidence="1">
        <text>tRNA(Arg) + L-arginine + ATP = L-arginyl-tRNA(Arg) + AMP + diphosphate</text>
        <dbReference type="Rhea" id="RHEA:20301"/>
        <dbReference type="Rhea" id="RHEA-COMP:9658"/>
        <dbReference type="Rhea" id="RHEA-COMP:9673"/>
        <dbReference type="ChEBI" id="CHEBI:30616"/>
        <dbReference type="ChEBI" id="CHEBI:32682"/>
        <dbReference type="ChEBI" id="CHEBI:33019"/>
        <dbReference type="ChEBI" id="CHEBI:78442"/>
        <dbReference type="ChEBI" id="CHEBI:78513"/>
        <dbReference type="ChEBI" id="CHEBI:456215"/>
        <dbReference type="EC" id="6.1.1.19"/>
    </reaction>
</comment>
<comment type="subunit">
    <text evidence="1">Monomer.</text>
</comment>
<comment type="subcellular location">
    <subcellularLocation>
        <location evidence="1">Cytoplasm</location>
    </subcellularLocation>
</comment>
<comment type="similarity">
    <text evidence="1">Belongs to the class-I aminoacyl-tRNA synthetase family.</text>
</comment>
<keyword id="KW-0030">Aminoacyl-tRNA synthetase</keyword>
<keyword id="KW-0067">ATP-binding</keyword>
<keyword id="KW-0963">Cytoplasm</keyword>
<keyword id="KW-0436">Ligase</keyword>
<keyword id="KW-0547">Nucleotide-binding</keyword>
<keyword id="KW-0648">Protein biosynthesis</keyword>
<name>SYR_DEHMC</name>
<evidence type="ECO:0000255" key="1">
    <source>
        <dbReference type="HAMAP-Rule" id="MF_00123"/>
    </source>
</evidence>
<sequence length="556" mass="61876">MNSILAIKNIIIESLSQAMEKARQEGQIPALSVDISIEHPQKTNYGDYATSLPLRLAKATGKRPMELAQILASYIETGSGISKVSVAPPGFINFTFSKEWLCSLVKTILTEAGSYGNINMGGGSRVQIEFVSANPTGPIHIGHGRGAVLGSTLSNILKAAGYYVEEEFYINDAGSQIDAFKRTLFARYQQALGKDAAVPQDGYHGQYMVDLAAEMVTKYGDKYLQMPADIAQNDLGEIGMARMLCLISDDLKALKVDFDIWFSERSLYSGGQYKTAMDILSGNNYIAERDNATWFSSTLLGDSKDNVIVRSDGTPTYFASDIAYHYNKFIERKFDRVINIWGADHQGHVSRMKAMVSALGINPERLTTLLFQMITLKRGGELVRLSKRTGEIISLREVIEEVGADACRFFFLARSTESQMDFDLELAKKESAENPVYYVQYAHARICSILHLAAEKQLDYSTGDTDLLGEEAELELIRKMAELPEIVETVSRTLEPHHLTYYAQELANAFHQFYKDCRVISDNAELTCARLKLVDASRIVLARTLHLMGMTSPESM</sequence>